<name>RAD25_HALMA</name>
<feature type="chain" id="PRO_0000429043" description="Putative DNA 3'-5' helicase Rad25">
    <location>
        <begin position="1"/>
        <end position="621"/>
    </location>
</feature>
<feature type="domain" description="Helicase ATP-binding" evidence="1">
    <location>
        <begin position="268"/>
        <end position="417"/>
    </location>
</feature>
<feature type="domain" description="Helicase C-terminal" evidence="1">
    <location>
        <begin position="469"/>
        <end position="621"/>
    </location>
</feature>
<feature type="region of interest" description="Disordered" evidence="2">
    <location>
        <begin position="441"/>
        <end position="465"/>
    </location>
</feature>
<feature type="short sequence motif" description="DEAH box">
    <location>
        <begin position="371"/>
        <end position="374"/>
    </location>
</feature>
<feature type="binding site" evidence="1">
    <location>
        <begin position="281"/>
        <end position="288"/>
    </location>
    <ligand>
        <name>ATP</name>
        <dbReference type="ChEBI" id="CHEBI:30616"/>
    </ligand>
</feature>
<dbReference type="EC" id="5.6.2.4" evidence="1"/>
<dbReference type="EMBL" id="AY596297">
    <property type="protein sequence ID" value="AAV45245.1"/>
    <property type="status" value="ALT_INIT"/>
    <property type="molecule type" value="Genomic_DNA"/>
</dbReference>
<dbReference type="RefSeq" id="WP_004963031.1">
    <property type="nucleotide sequence ID" value="NZ_CP039138.1"/>
</dbReference>
<dbReference type="SMR" id="Q5V5F7"/>
<dbReference type="STRING" id="272569.rrnAC0181"/>
<dbReference type="PaxDb" id="272569-rrnAC0181"/>
<dbReference type="EnsemblBacteria" id="AAV45245">
    <property type="protein sequence ID" value="AAV45245"/>
    <property type="gene ID" value="rrnAC0181"/>
</dbReference>
<dbReference type="KEGG" id="hma:rrnAC0181"/>
<dbReference type="PATRIC" id="fig|272569.17.peg.977"/>
<dbReference type="eggNOG" id="arCOG00874">
    <property type="taxonomic scope" value="Archaea"/>
</dbReference>
<dbReference type="HOGENOM" id="CLU_008213_4_0_2"/>
<dbReference type="Proteomes" id="UP000001169">
    <property type="component" value="Chromosome I"/>
</dbReference>
<dbReference type="GO" id="GO:0005524">
    <property type="term" value="F:ATP binding"/>
    <property type="evidence" value="ECO:0007669"/>
    <property type="project" value="UniProtKB-UniRule"/>
</dbReference>
<dbReference type="GO" id="GO:0016887">
    <property type="term" value="F:ATP hydrolysis activity"/>
    <property type="evidence" value="ECO:0007669"/>
    <property type="project" value="InterPro"/>
</dbReference>
<dbReference type="GO" id="GO:0140097">
    <property type="term" value="F:catalytic activity, acting on DNA"/>
    <property type="evidence" value="ECO:0007669"/>
    <property type="project" value="UniProtKB-ARBA"/>
</dbReference>
<dbReference type="GO" id="GO:0003677">
    <property type="term" value="F:DNA binding"/>
    <property type="evidence" value="ECO:0007669"/>
    <property type="project" value="InterPro"/>
</dbReference>
<dbReference type="GO" id="GO:0004386">
    <property type="term" value="F:helicase activity"/>
    <property type="evidence" value="ECO:0007669"/>
    <property type="project" value="UniProtKB-UniRule"/>
</dbReference>
<dbReference type="Gene3D" id="3.40.50.300">
    <property type="entry name" value="P-loop containing nucleotide triphosphate hydrolases"/>
    <property type="match status" value="2"/>
</dbReference>
<dbReference type="HAMAP" id="MF_01489">
    <property type="entry name" value="Helicase_Rad25_arch"/>
    <property type="match status" value="1"/>
</dbReference>
<dbReference type="InterPro" id="IPR003593">
    <property type="entry name" value="AAA+_ATPase"/>
</dbReference>
<dbReference type="InterPro" id="IPR050615">
    <property type="entry name" value="ATP-dep_DNA_Helicase"/>
</dbReference>
<dbReference type="InterPro" id="IPR032438">
    <property type="entry name" value="ERCC3_RAD25_C"/>
</dbReference>
<dbReference type="InterPro" id="IPR006935">
    <property type="entry name" value="Helicase/UvrB_N"/>
</dbReference>
<dbReference type="InterPro" id="IPR014001">
    <property type="entry name" value="Helicase_ATP-bd"/>
</dbReference>
<dbReference type="InterPro" id="IPR001650">
    <property type="entry name" value="Helicase_C-like"/>
</dbReference>
<dbReference type="InterPro" id="IPR030882">
    <property type="entry name" value="Helicase_Rad25_arc"/>
</dbReference>
<dbReference type="InterPro" id="IPR027417">
    <property type="entry name" value="P-loop_NTPase"/>
</dbReference>
<dbReference type="PANTHER" id="PTHR11274:SF0">
    <property type="entry name" value="GENERAL TRANSCRIPTION AND DNA REPAIR FACTOR IIH HELICASE SUBUNIT XPB"/>
    <property type="match status" value="1"/>
</dbReference>
<dbReference type="PANTHER" id="PTHR11274">
    <property type="entry name" value="RAD25/XP-B DNA REPAIR HELICASE"/>
    <property type="match status" value="1"/>
</dbReference>
<dbReference type="Pfam" id="PF16203">
    <property type="entry name" value="ERCC3_RAD25_C"/>
    <property type="match status" value="1"/>
</dbReference>
<dbReference type="Pfam" id="PF04851">
    <property type="entry name" value="ResIII"/>
    <property type="match status" value="1"/>
</dbReference>
<dbReference type="SMART" id="SM00382">
    <property type="entry name" value="AAA"/>
    <property type="match status" value="1"/>
</dbReference>
<dbReference type="SMART" id="SM00487">
    <property type="entry name" value="DEXDc"/>
    <property type="match status" value="1"/>
</dbReference>
<dbReference type="SMART" id="SM00490">
    <property type="entry name" value="HELICc"/>
    <property type="match status" value="1"/>
</dbReference>
<dbReference type="SUPFAM" id="SSF52540">
    <property type="entry name" value="P-loop containing nucleoside triphosphate hydrolases"/>
    <property type="match status" value="2"/>
</dbReference>
<dbReference type="PROSITE" id="PS51192">
    <property type="entry name" value="HELICASE_ATP_BIND_1"/>
    <property type="match status" value="1"/>
</dbReference>
<dbReference type="PROSITE" id="PS51194">
    <property type="entry name" value="HELICASE_CTER"/>
    <property type="match status" value="1"/>
</dbReference>
<gene>
    <name evidence="1" type="primary">rad25</name>
    <name type="ordered locus">rrnAC0181</name>
</gene>
<sequence length="621" mass="69875">MTDEEPADRDDDSDSTPELELDAVYDAIDAVGRPHLTATEFSRKTDLTPDEARAALERLADDGDIERQDVSEVESVWYPTDIAEVTDRERVVLFPDRREVVVEHPDQFTRAQLSQFARLQDTNRSGGYVYELREEDIWAAPHESLDDLLTTMRDVLGERSPHLEEWVTSQWERARKFRLKTHEDGYVVLEAESDDLMGNVARPKLDDDHLRAPISDSESWVNEDATAEIKRTLYEAGYPVRDDRDLETGDAIEMDLRLRLRDYQQDWVERFTEQGSGVFVGPPGSGKTVAAMGAMAAIGGETLILVPSRELATQWRDELVRHTSLTDDDIGEYHGGEKEIRAVTIATYRTAGMDRHRKLFDQRKWGLIVFDEVHHVPSPIHRRSADLQTKHRLGLTATPTRESDDEEEIFTLIGPPIGTDWGKLFDEGYVAEPEVEIRLVPWGDETEQSEYSSTSGHDRRQAAASNTGKIDEIRYALAENPAAKALVFIEYLDQGEAISEAIDAPFISGETPHARREKLFDEFRRGELTTLVVSRVGDEGIDLPDAELALVASGLGGSRRQGAQRAGRTMRPAGDARMVILATRGTTEEDFVRRQMRHLASKGIRVTETEAEAVEPPAKTE</sequence>
<organism>
    <name type="scientific">Haloarcula marismortui (strain ATCC 43049 / DSM 3752 / JCM 8966 / VKM B-1809)</name>
    <name type="common">Halobacterium marismortui</name>
    <dbReference type="NCBI Taxonomy" id="272569"/>
    <lineage>
        <taxon>Archaea</taxon>
        <taxon>Methanobacteriati</taxon>
        <taxon>Methanobacteriota</taxon>
        <taxon>Stenosarchaea group</taxon>
        <taxon>Halobacteria</taxon>
        <taxon>Halobacteriales</taxon>
        <taxon>Haloarculaceae</taxon>
        <taxon>Haloarcula</taxon>
    </lineage>
</organism>
<proteinExistence type="inferred from homology"/>
<protein>
    <recommendedName>
        <fullName evidence="1">Putative DNA 3'-5' helicase Rad25</fullName>
        <ecNumber evidence="1">5.6.2.4</ecNumber>
    </recommendedName>
</protein>
<reference key="1">
    <citation type="journal article" date="2004" name="Genome Res.">
        <title>Genome sequence of Haloarcula marismortui: a halophilic archaeon from the Dead Sea.</title>
        <authorList>
            <person name="Baliga N.S."/>
            <person name="Bonneau R."/>
            <person name="Facciotti M.T."/>
            <person name="Pan M."/>
            <person name="Glusman G."/>
            <person name="Deutsch E.W."/>
            <person name="Shannon P."/>
            <person name="Chiu Y."/>
            <person name="Weng R.S."/>
            <person name="Gan R.R."/>
            <person name="Hung P."/>
            <person name="Date S.V."/>
            <person name="Marcotte E."/>
            <person name="Hood L."/>
            <person name="Ng W.V."/>
        </authorList>
    </citation>
    <scope>NUCLEOTIDE SEQUENCE [LARGE SCALE GENOMIC DNA]</scope>
    <source>
        <strain>ATCC 43049 / DSM 3752 / JCM 8966 / VKM B-1809</strain>
    </source>
</reference>
<keyword id="KW-0067">ATP-binding</keyword>
<keyword id="KW-0347">Helicase</keyword>
<keyword id="KW-0378">Hydrolase</keyword>
<keyword id="KW-0413">Isomerase</keyword>
<keyword id="KW-0547">Nucleotide-binding</keyword>
<keyword id="KW-1185">Reference proteome</keyword>
<accession>Q5V5F7</accession>
<evidence type="ECO:0000255" key="1">
    <source>
        <dbReference type="HAMAP-Rule" id="MF_01489"/>
    </source>
</evidence>
<evidence type="ECO:0000256" key="2">
    <source>
        <dbReference type="SAM" id="MobiDB-lite"/>
    </source>
</evidence>
<evidence type="ECO:0000305" key="3"/>
<comment type="catalytic activity">
    <reaction evidence="1">
        <text>Couples ATP hydrolysis with the unwinding of duplex DNA by translocating in the 3'-5' direction.</text>
        <dbReference type="EC" id="5.6.2.4"/>
    </reaction>
</comment>
<comment type="catalytic activity">
    <reaction evidence="1">
        <text>ATP + H2O = ADP + phosphate + H(+)</text>
        <dbReference type="Rhea" id="RHEA:13065"/>
        <dbReference type="ChEBI" id="CHEBI:15377"/>
        <dbReference type="ChEBI" id="CHEBI:15378"/>
        <dbReference type="ChEBI" id="CHEBI:30616"/>
        <dbReference type="ChEBI" id="CHEBI:43474"/>
        <dbReference type="ChEBI" id="CHEBI:456216"/>
        <dbReference type="EC" id="5.6.2.4"/>
    </reaction>
</comment>
<comment type="similarity">
    <text evidence="1">Belongs to the helicase family. RAD25/XPB subfamily.</text>
</comment>
<comment type="sequence caution" evidence="3">
    <conflict type="erroneous initiation">
        <sequence resource="EMBL-CDS" id="AAV45245"/>
    </conflict>
    <text>Truncated N-terminus.</text>
</comment>